<dbReference type="EC" id="2.7.4.25"/>
<dbReference type="EMBL" id="AE000783">
    <property type="protein sequence ID" value="AAC67164.1"/>
    <property type="molecule type" value="Genomic_DNA"/>
</dbReference>
<dbReference type="PIR" id="B70202">
    <property type="entry name" value="B70202"/>
</dbReference>
<dbReference type="RefSeq" id="NP_212953.1">
    <property type="nucleotide sequence ID" value="NC_001318.1"/>
</dbReference>
<dbReference type="RefSeq" id="WP_010889829.1">
    <property type="nucleotide sequence ID" value="NC_001318.1"/>
</dbReference>
<dbReference type="SMR" id="O51759"/>
<dbReference type="STRING" id="224326.BB_0819"/>
<dbReference type="PaxDb" id="224326-BB_0819"/>
<dbReference type="EnsemblBacteria" id="AAC67164">
    <property type="protein sequence ID" value="AAC67164"/>
    <property type="gene ID" value="BB_0819"/>
</dbReference>
<dbReference type="KEGG" id="bbu:BB_0819"/>
<dbReference type="PATRIC" id="fig|224326.49.peg.1211"/>
<dbReference type="HOGENOM" id="CLU_079959_1_0_12"/>
<dbReference type="OrthoDB" id="5291502at2"/>
<dbReference type="Proteomes" id="UP000001807">
    <property type="component" value="Chromosome"/>
</dbReference>
<dbReference type="GO" id="GO:0005737">
    <property type="term" value="C:cytoplasm"/>
    <property type="evidence" value="ECO:0007669"/>
    <property type="project" value="UniProtKB-SubCell"/>
</dbReference>
<dbReference type="GO" id="GO:0005524">
    <property type="term" value="F:ATP binding"/>
    <property type="evidence" value="ECO:0007669"/>
    <property type="project" value="UniProtKB-UniRule"/>
</dbReference>
<dbReference type="GO" id="GO:0036430">
    <property type="term" value="F:CMP kinase activity"/>
    <property type="evidence" value="ECO:0007669"/>
    <property type="project" value="RHEA"/>
</dbReference>
<dbReference type="GO" id="GO:0036431">
    <property type="term" value="F:dCMP kinase activity"/>
    <property type="evidence" value="ECO:0007669"/>
    <property type="project" value="RHEA"/>
</dbReference>
<dbReference type="GO" id="GO:0006220">
    <property type="term" value="P:pyrimidine nucleotide metabolic process"/>
    <property type="evidence" value="ECO:0007669"/>
    <property type="project" value="UniProtKB-UniRule"/>
</dbReference>
<dbReference type="CDD" id="cd02020">
    <property type="entry name" value="CMPK"/>
    <property type="match status" value="1"/>
</dbReference>
<dbReference type="Gene3D" id="3.40.50.300">
    <property type="entry name" value="P-loop containing nucleotide triphosphate hydrolases"/>
    <property type="match status" value="1"/>
</dbReference>
<dbReference type="HAMAP" id="MF_00239">
    <property type="entry name" value="Cytidyl_kinase_type2"/>
    <property type="match status" value="1"/>
</dbReference>
<dbReference type="InterPro" id="IPR011892">
    <property type="entry name" value="Cyt_kin_arch"/>
</dbReference>
<dbReference type="InterPro" id="IPR011994">
    <property type="entry name" value="Cytidylate_kinase_dom"/>
</dbReference>
<dbReference type="InterPro" id="IPR027417">
    <property type="entry name" value="P-loop_NTPase"/>
</dbReference>
<dbReference type="NCBIfam" id="TIGR02173">
    <property type="entry name" value="cyt_kin_arch"/>
    <property type="match status" value="1"/>
</dbReference>
<dbReference type="Pfam" id="PF13189">
    <property type="entry name" value="Cytidylate_kin2"/>
    <property type="match status" value="1"/>
</dbReference>
<dbReference type="SUPFAM" id="SSF52540">
    <property type="entry name" value="P-loop containing nucleoside triphosphate hydrolases"/>
    <property type="match status" value="1"/>
</dbReference>
<gene>
    <name type="primary">cmk2</name>
    <name type="ordered locus">BB_0819</name>
</gene>
<name>KCY2_BORBU</name>
<organism>
    <name type="scientific">Borreliella burgdorferi (strain ATCC 35210 / DSM 4680 / CIP 102532 / B31)</name>
    <name type="common">Borrelia burgdorferi</name>
    <dbReference type="NCBI Taxonomy" id="224326"/>
    <lineage>
        <taxon>Bacteria</taxon>
        <taxon>Pseudomonadati</taxon>
        <taxon>Spirochaetota</taxon>
        <taxon>Spirochaetia</taxon>
        <taxon>Spirochaetales</taxon>
        <taxon>Borreliaceae</taxon>
        <taxon>Borreliella</taxon>
    </lineage>
</organism>
<proteinExistence type="inferred from homology"/>
<keyword id="KW-0067">ATP-binding</keyword>
<keyword id="KW-0963">Cytoplasm</keyword>
<keyword id="KW-0418">Kinase</keyword>
<keyword id="KW-0547">Nucleotide-binding</keyword>
<keyword id="KW-1185">Reference proteome</keyword>
<keyword id="KW-0808">Transferase</keyword>
<protein>
    <recommendedName>
        <fullName>Cytidylate kinase 2</fullName>
        <shortName>CK 2</shortName>
        <ecNumber>2.7.4.25</ecNumber>
    </recommendedName>
    <alternativeName>
        <fullName>Cytidine monophosphate kinase 2</fullName>
        <shortName>CMP kinase 2</shortName>
    </alternativeName>
</protein>
<reference key="1">
    <citation type="journal article" date="1997" name="Nature">
        <title>Genomic sequence of a Lyme disease spirochaete, Borrelia burgdorferi.</title>
        <authorList>
            <person name="Fraser C.M."/>
            <person name="Casjens S."/>
            <person name="Huang W.M."/>
            <person name="Sutton G.G."/>
            <person name="Clayton R.A."/>
            <person name="Lathigra R."/>
            <person name="White O."/>
            <person name="Ketchum K.A."/>
            <person name="Dodson R.J."/>
            <person name="Hickey E.K."/>
            <person name="Gwinn M.L."/>
            <person name="Dougherty B.A."/>
            <person name="Tomb J.-F."/>
            <person name="Fleischmann R.D."/>
            <person name="Richardson D.L."/>
            <person name="Peterson J.D."/>
            <person name="Kerlavage A.R."/>
            <person name="Quackenbush J."/>
            <person name="Salzberg S.L."/>
            <person name="Hanson M."/>
            <person name="van Vugt R."/>
            <person name="Palmer N."/>
            <person name="Adams M.D."/>
            <person name="Gocayne J.D."/>
            <person name="Weidman J.F."/>
            <person name="Utterback T.R."/>
            <person name="Watthey L."/>
            <person name="McDonald L.A."/>
            <person name="Artiach P."/>
            <person name="Bowman C."/>
            <person name="Garland S.A."/>
            <person name="Fujii C."/>
            <person name="Cotton M.D."/>
            <person name="Horst K."/>
            <person name="Roberts K.M."/>
            <person name="Hatch B."/>
            <person name="Smith H.O."/>
            <person name="Venter J.C."/>
        </authorList>
    </citation>
    <scope>NUCLEOTIDE SEQUENCE [LARGE SCALE GENOMIC DNA]</scope>
    <source>
        <strain>ATCC 35210 / DSM 4680 / CIP 102532 / B31</strain>
    </source>
</reference>
<comment type="catalytic activity">
    <reaction>
        <text>CMP + ATP = CDP + ADP</text>
        <dbReference type="Rhea" id="RHEA:11600"/>
        <dbReference type="ChEBI" id="CHEBI:30616"/>
        <dbReference type="ChEBI" id="CHEBI:58069"/>
        <dbReference type="ChEBI" id="CHEBI:60377"/>
        <dbReference type="ChEBI" id="CHEBI:456216"/>
        <dbReference type="EC" id="2.7.4.25"/>
    </reaction>
</comment>
<comment type="catalytic activity">
    <reaction>
        <text>dCMP + ATP = dCDP + ADP</text>
        <dbReference type="Rhea" id="RHEA:25094"/>
        <dbReference type="ChEBI" id="CHEBI:30616"/>
        <dbReference type="ChEBI" id="CHEBI:57566"/>
        <dbReference type="ChEBI" id="CHEBI:58593"/>
        <dbReference type="ChEBI" id="CHEBI:456216"/>
        <dbReference type="EC" id="2.7.4.25"/>
    </reaction>
</comment>
<comment type="subcellular location">
    <subcellularLocation>
        <location evidence="1">Cytoplasm</location>
    </subcellularLocation>
</comment>
<comment type="similarity">
    <text evidence="2">Belongs to the cytidylate kinase family. Type 2 subfamily.</text>
</comment>
<sequence length="180" mass="21066">MKIALSGKSGCGNTTVSGMIAKHYGLEFINYTFHDIAREHNIPFSEFYEKEIIGRNDYYWDKYLDNRLSVLSRKNNTVLASRLAIWISKSADLKIYLYAKMEVRAERIMTREGGMYSDVLSSTFIRDENDKKRYLAIYNIDIDDYFSETDLVIDVTNINPNEVFELIRDEIDKRNLKKNS</sequence>
<evidence type="ECO:0000250" key="1"/>
<evidence type="ECO:0000305" key="2"/>
<accession>O51759</accession>
<feature type="chain" id="PRO_0000132028" description="Cytidylate kinase 2">
    <location>
        <begin position="1"/>
        <end position="180"/>
    </location>
</feature>
<feature type="binding site" evidence="1">
    <location>
        <begin position="7"/>
        <end position="15"/>
    </location>
    <ligand>
        <name>ATP</name>
        <dbReference type="ChEBI" id="CHEBI:30616"/>
    </ligand>
</feature>